<gene>
    <name evidence="1" type="primary">clpX</name>
    <name type="ordered locus">Neut_0202</name>
</gene>
<organism>
    <name type="scientific">Nitrosomonas eutropha (strain DSM 101675 / C91 / Nm57)</name>
    <dbReference type="NCBI Taxonomy" id="335283"/>
    <lineage>
        <taxon>Bacteria</taxon>
        <taxon>Pseudomonadati</taxon>
        <taxon>Pseudomonadota</taxon>
        <taxon>Betaproteobacteria</taxon>
        <taxon>Nitrosomonadales</taxon>
        <taxon>Nitrosomonadaceae</taxon>
        <taxon>Nitrosomonas</taxon>
    </lineage>
</organism>
<proteinExistence type="inferred from homology"/>
<dbReference type="EMBL" id="CP000450">
    <property type="protein sequence ID" value="ABI58488.1"/>
    <property type="molecule type" value="Genomic_DNA"/>
</dbReference>
<dbReference type="RefSeq" id="WP_011633333.1">
    <property type="nucleotide sequence ID" value="NC_008344.1"/>
</dbReference>
<dbReference type="SMR" id="Q0AJI3"/>
<dbReference type="STRING" id="335283.Neut_0202"/>
<dbReference type="KEGG" id="net:Neut_0202"/>
<dbReference type="eggNOG" id="COG1219">
    <property type="taxonomic scope" value="Bacteria"/>
</dbReference>
<dbReference type="HOGENOM" id="CLU_014218_8_2_4"/>
<dbReference type="OrthoDB" id="9804062at2"/>
<dbReference type="Proteomes" id="UP000001966">
    <property type="component" value="Chromosome"/>
</dbReference>
<dbReference type="GO" id="GO:0009376">
    <property type="term" value="C:HslUV protease complex"/>
    <property type="evidence" value="ECO:0007669"/>
    <property type="project" value="TreeGrafter"/>
</dbReference>
<dbReference type="GO" id="GO:0005524">
    <property type="term" value="F:ATP binding"/>
    <property type="evidence" value="ECO:0007669"/>
    <property type="project" value="UniProtKB-UniRule"/>
</dbReference>
<dbReference type="GO" id="GO:0016887">
    <property type="term" value="F:ATP hydrolysis activity"/>
    <property type="evidence" value="ECO:0007669"/>
    <property type="project" value="InterPro"/>
</dbReference>
<dbReference type="GO" id="GO:0140662">
    <property type="term" value="F:ATP-dependent protein folding chaperone"/>
    <property type="evidence" value="ECO:0007669"/>
    <property type="project" value="InterPro"/>
</dbReference>
<dbReference type="GO" id="GO:0046983">
    <property type="term" value="F:protein dimerization activity"/>
    <property type="evidence" value="ECO:0007669"/>
    <property type="project" value="InterPro"/>
</dbReference>
<dbReference type="GO" id="GO:0051082">
    <property type="term" value="F:unfolded protein binding"/>
    <property type="evidence" value="ECO:0007669"/>
    <property type="project" value="UniProtKB-UniRule"/>
</dbReference>
<dbReference type="GO" id="GO:0008270">
    <property type="term" value="F:zinc ion binding"/>
    <property type="evidence" value="ECO:0007669"/>
    <property type="project" value="InterPro"/>
</dbReference>
<dbReference type="GO" id="GO:0051301">
    <property type="term" value="P:cell division"/>
    <property type="evidence" value="ECO:0007669"/>
    <property type="project" value="TreeGrafter"/>
</dbReference>
<dbReference type="GO" id="GO:0051603">
    <property type="term" value="P:proteolysis involved in protein catabolic process"/>
    <property type="evidence" value="ECO:0007669"/>
    <property type="project" value="TreeGrafter"/>
</dbReference>
<dbReference type="CDD" id="cd19497">
    <property type="entry name" value="RecA-like_ClpX"/>
    <property type="match status" value="1"/>
</dbReference>
<dbReference type="FunFam" id="1.10.8.60:FF:000002">
    <property type="entry name" value="ATP-dependent Clp protease ATP-binding subunit ClpX"/>
    <property type="match status" value="1"/>
</dbReference>
<dbReference type="FunFam" id="3.40.50.300:FF:000005">
    <property type="entry name" value="ATP-dependent Clp protease ATP-binding subunit ClpX"/>
    <property type="match status" value="1"/>
</dbReference>
<dbReference type="Gene3D" id="1.10.8.60">
    <property type="match status" value="1"/>
</dbReference>
<dbReference type="Gene3D" id="6.20.220.10">
    <property type="entry name" value="ClpX chaperone, C4-type zinc finger domain"/>
    <property type="match status" value="1"/>
</dbReference>
<dbReference type="Gene3D" id="3.40.50.300">
    <property type="entry name" value="P-loop containing nucleotide triphosphate hydrolases"/>
    <property type="match status" value="1"/>
</dbReference>
<dbReference type="HAMAP" id="MF_00175">
    <property type="entry name" value="ClpX"/>
    <property type="match status" value="1"/>
</dbReference>
<dbReference type="InterPro" id="IPR003593">
    <property type="entry name" value="AAA+_ATPase"/>
</dbReference>
<dbReference type="InterPro" id="IPR050052">
    <property type="entry name" value="ATP-dep_Clp_protease_ClpX"/>
</dbReference>
<dbReference type="InterPro" id="IPR003959">
    <property type="entry name" value="ATPase_AAA_core"/>
</dbReference>
<dbReference type="InterPro" id="IPR019489">
    <property type="entry name" value="Clp_ATPase_C"/>
</dbReference>
<dbReference type="InterPro" id="IPR004487">
    <property type="entry name" value="Clp_protease_ATP-bd_su_ClpX"/>
</dbReference>
<dbReference type="InterPro" id="IPR046425">
    <property type="entry name" value="ClpX_bact"/>
</dbReference>
<dbReference type="InterPro" id="IPR027417">
    <property type="entry name" value="P-loop_NTPase"/>
</dbReference>
<dbReference type="InterPro" id="IPR010603">
    <property type="entry name" value="Znf_CppX_C4"/>
</dbReference>
<dbReference type="InterPro" id="IPR038366">
    <property type="entry name" value="Znf_CppX_C4_sf"/>
</dbReference>
<dbReference type="NCBIfam" id="TIGR00382">
    <property type="entry name" value="clpX"/>
    <property type="match status" value="1"/>
</dbReference>
<dbReference type="NCBIfam" id="NF003745">
    <property type="entry name" value="PRK05342.1"/>
    <property type="match status" value="1"/>
</dbReference>
<dbReference type="PANTHER" id="PTHR48102:SF7">
    <property type="entry name" value="ATP-DEPENDENT CLP PROTEASE ATP-BINDING SUBUNIT CLPX-LIKE, MITOCHONDRIAL"/>
    <property type="match status" value="1"/>
</dbReference>
<dbReference type="PANTHER" id="PTHR48102">
    <property type="entry name" value="ATP-DEPENDENT CLP PROTEASE ATP-BINDING SUBUNIT CLPX-LIKE, MITOCHONDRIAL-RELATED"/>
    <property type="match status" value="1"/>
</dbReference>
<dbReference type="Pfam" id="PF07724">
    <property type="entry name" value="AAA_2"/>
    <property type="match status" value="1"/>
</dbReference>
<dbReference type="Pfam" id="PF10431">
    <property type="entry name" value="ClpB_D2-small"/>
    <property type="match status" value="1"/>
</dbReference>
<dbReference type="Pfam" id="PF06689">
    <property type="entry name" value="zf-C4_ClpX"/>
    <property type="match status" value="1"/>
</dbReference>
<dbReference type="SMART" id="SM00382">
    <property type="entry name" value="AAA"/>
    <property type="match status" value="1"/>
</dbReference>
<dbReference type="SMART" id="SM01086">
    <property type="entry name" value="ClpB_D2-small"/>
    <property type="match status" value="1"/>
</dbReference>
<dbReference type="SMART" id="SM00994">
    <property type="entry name" value="zf-C4_ClpX"/>
    <property type="match status" value="1"/>
</dbReference>
<dbReference type="SUPFAM" id="SSF57716">
    <property type="entry name" value="Glucocorticoid receptor-like (DNA-binding domain)"/>
    <property type="match status" value="1"/>
</dbReference>
<dbReference type="SUPFAM" id="SSF52540">
    <property type="entry name" value="P-loop containing nucleoside triphosphate hydrolases"/>
    <property type="match status" value="1"/>
</dbReference>
<dbReference type="PROSITE" id="PS51902">
    <property type="entry name" value="CLPX_ZB"/>
    <property type="match status" value="1"/>
</dbReference>
<feature type="chain" id="PRO_1000024597" description="ATP-dependent Clp protease ATP-binding subunit ClpX">
    <location>
        <begin position="1"/>
        <end position="427"/>
    </location>
</feature>
<feature type="domain" description="ClpX-type ZB" evidence="2">
    <location>
        <begin position="1"/>
        <end position="54"/>
    </location>
</feature>
<feature type="binding site" evidence="2">
    <location>
        <position position="13"/>
    </location>
    <ligand>
        <name>Zn(2+)</name>
        <dbReference type="ChEBI" id="CHEBI:29105"/>
    </ligand>
</feature>
<feature type="binding site" evidence="2">
    <location>
        <position position="16"/>
    </location>
    <ligand>
        <name>Zn(2+)</name>
        <dbReference type="ChEBI" id="CHEBI:29105"/>
    </ligand>
</feature>
<feature type="binding site" evidence="2">
    <location>
        <position position="35"/>
    </location>
    <ligand>
        <name>Zn(2+)</name>
        <dbReference type="ChEBI" id="CHEBI:29105"/>
    </ligand>
</feature>
<feature type="binding site" evidence="2">
    <location>
        <position position="38"/>
    </location>
    <ligand>
        <name>Zn(2+)</name>
        <dbReference type="ChEBI" id="CHEBI:29105"/>
    </ligand>
</feature>
<feature type="binding site" evidence="1">
    <location>
        <begin position="123"/>
        <end position="130"/>
    </location>
    <ligand>
        <name>ATP</name>
        <dbReference type="ChEBI" id="CHEBI:30616"/>
    </ligand>
</feature>
<keyword id="KW-0067">ATP-binding</keyword>
<keyword id="KW-0143">Chaperone</keyword>
<keyword id="KW-0479">Metal-binding</keyword>
<keyword id="KW-0547">Nucleotide-binding</keyword>
<keyword id="KW-0862">Zinc</keyword>
<comment type="function">
    <text evidence="1">ATP-dependent specificity component of the Clp protease. It directs the protease to specific substrates. Can perform chaperone functions in the absence of ClpP.</text>
</comment>
<comment type="subunit">
    <text evidence="1">Component of the ClpX-ClpP complex. Forms a hexameric ring that, in the presence of ATP, binds to fourteen ClpP subunits assembled into a disk-like structure with a central cavity, resembling the structure of eukaryotic proteasomes.</text>
</comment>
<comment type="similarity">
    <text evidence="1">Belongs to the ClpX chaperone family.</text>
</comment>
<evidence type="ECO:0000255" key="1">
    <source>
        <dbReference type="HAMAP-Rule" id="MF_00175"/>
    </source>
</evidence>
<evidence type="ECO:0000255" key="2">
    <source>
        <dbReference type="PROSITE-ProRule" id="PRU01250"/>
    </source>
</evidence>
<name>CLPX_NITEC</name>
<accession>Q0AJI3</accession>
<protein>
    <recommendedName>
        <fullName evidence="1">ATP-dependent Clp protease ATP-binding subunit ClpX</fullName>
    </recommendedName>
</protein>
<sequence length="427" mass="47101">MSEKTNDEKLLYCSFCGKSQREVRKLIAGPSVFICDECIDLCNDIIREEIQVDETAKLSKTSLPTPHEICETLDQYVIGQESAKKILSVAVYNHYKRLRNLSKVNAGSDDIELAKSNILLIGPTGSGKTLLAQTLARLLDVPFVIADATTLTEAGYVGEDVENIIQKLLQASNHDVEKAQRGIVYIDEIDKISRKSDNPSITRDVSGEGVQQALLKLIEGTAALVPPQGGRKHPNQEFIQVDTTNILFICGGAFDGIDKIIRARSEKSGIGFGADVINQNDRKELNKILGDIEPEDLIKYGLIPEFIGRLPVVATLRELNEAALIQILIEPKNALVKQYSKLFSMEGGVELEFREQALVTIARKALARKTGARGLRSILEETLLDIMYDLPSIKNVSKVVIESSSTNDDLQPIIIYAEKPKLARSSK</sequence>
<reference key="1">
    <citation type="journal article" date="2007" name="Environ. Microbiol.">
        <title>Whole-genome analysis of the ammonia-oxidizing bacterium, Nitrosomonas eutropha C91: implications for niche adaptation.</title>
        <authorList>
            <person name="Stein L.Y."/>
            <person name="Arp D.J."/>
            <person name="Berube P.M."/>
            <person name="Chain P.S."/>
            <person name="Hauser L."/>
            <person name="Jetten M.S."/>
            <person name="Klotz M.G."/>
            <person name="Larimer F.W."/>
            <person name="Norton J.M."/>
            <person name="Op den Camp H.J.M."/>
            <person name="Shin M."/>
            <person name="Wei X."/>
        </authorList>
    </citation>
    <scope>NUCLEOTIDE SEQUENCE [LARGE SCALE GENOMIC DNA]</scope>
    <source>
        <strain>DSM 101675 / C91 / Nm57</strain>
    </source>
</reference>